<dbReference type="EMBL" id="AB037606">
    <property type="protein sequence ID" value="BAA90565.1"/>
    <property type="molecule type" value="Genomic_DNA"/>
</dbReference>
<dbReference type="SMR" id="Q9MQY1"/>
<dbReference type="GO" id="GO:0005743">
    <property type="term" value="C:mitochondrial inner membrane"/>
    <property type="evidence" value="ECO:0007669"/>
    <property type="project" value="UniProtKB-SubCell"/>
</dbReference>
<dbReference type="GO" id="GO:0045275">
    <property type="term" value="C:respiratory chain complex III"/>
    <property type="evidence" value="ECO:0007669"/>
    <property type="project" value="InterPro"/>
</dbReference>
<dbReference type="GO" id="GO:0046872">
    <property type="term" value="F:metal ion binding"/>
    <property type="evidence" value="ECO:0007669"/>
    <property type="project" value="UniProtKB-KW"/>
</dbReference>
<dbReference type="GO" id="GO:0008121">
    <property type="term" value="F:ubiquinol-cytochrome-c reductase activity"/>
    <property type="evidence" value="ECO:0007669"/>
    <property type="project" value="InterPro"/>
</dbReference>
<dbReference type="GO" id="GO:0006122">
    <property type="term" value="P:mitochondrial electron transport, ubiquinol to cytochrome c"/>
    <property type="evidence" value="ECO:0007669"/>
    <property type="project" value="TreeGrafter"/>
</dbReference>
<dbReference type="CDD" id="cd00290">
    <property type="entry name" value="cytochrome_b_C"/>
    <property type="match status" value="1"/>
</dbReference>
<dbReference type="CDD" id="cd00284">
    <property type="entry name" value="Cytochrome_b_N"/>
    <property type="match status" value="1"/>
</dbReference>
<dbReference type="FunFam" id="1.20.810.10:FF:000002">
    <property type="entry name" value="Cytochrome b"/>
    <property type="match status" value="1"/>
</dbReference>
<dbReference type="Gene3D" id="1.20.810.10">
    <property type="entry name" value="Cytochrome Bc1 Complex, Chain C"/>
    <property type="match status" value="1"/>
</dbReference>
<dbReference type="InterPro" id="IPR005798">
    <property type="entry name" value="Cyt_b/b6_C"/>
</dbReference>
<dbReference type="InterPro" id="IPR036150">
    <property type="entry name" value="Cyt_b/b6_C_sf"/>
</dbReference>
<dbReference type="InterPro" id="IPR005797">
    <property type="entry name" value="Cyt_b/b6_N"/>
</dbReference>
<dbReference type="InterPro" id="IPR027387">
    <property type="entry name" value="Cytb/b6-like_sf"/>
</dbReference>
<dbReference type="InterPro" id="IPR030689">
    <property type="entry name" value="Cytochrome_b"/>
</dbReference>
<dbReference type="InterPro" id="IPR048260">
    <property type="entry name" value="Cytochrome_b_C_euk/bac"/>
</dbReference>
<dbReference type="InterPro" id="IPR048259">
    <property type="entry name" value="Cytochrome_b_N_euk/bac"/>
</dbReference>
<dbReference type="InterPro" id="IPR016174">
    <property type="entry name" value="Di-haem_cyt_TM"/>
</dbReference>
<dbReference type="PANTHER" id="PTHR19271">
    <property type="entry name" value="CYTOCHROME B"/>
    <property type="match status" value="1"/>
</dbReference>
<dbReference type="PANTHER" id="PTHR19271:SF16">
    <property type="entry name" value="CYTOCHROME B"/>
    <property type="match status" value="1"/>
</dbReference>
<dbReference type="Pfam" id="PF00032">
    <property type="entry name" value="Cytochrom_B_C"/>
    <property type="match status" value="1"/>
</dbReference>
<dbReference type="Pfam" id="PF00033">
    <property type="entry name" value="Cytochrome_B"/>
    <property type="match status" value="1"/>
</dbReference>
<dbReference type="PIRSF" id="PIRSF038885">
    <property type="entry name" value="COB"/>
    <property type="match status" value="1"/>
</dbReference>
<dbReference type="SUPFAM" id="SSF81648">
    <property type="entry name" value="a domain/subunit of cytochrome bc1 complex (Ubiquinol-cytochrome c reductase)"/>
    <property type="match status" value="1"/>
</dbReference>
<dbReference type="SUPFAM" id="SSF81342">
    <property type="entry name" value="Transmembrane di-heme cytochromes"/>
    <property type="match status" value="1"/>
</dbReference>
<dbReference type="PROSITE" id="PS51003">
    <property type="entry name" value="CYTB_CTER"/>
    <property type="match status" value="1"/>
</dbReference>
<dbReference type="PROSITE" id="PS51002">
    <property type="entry name" value="CYTB_NTER"/>
    <property type="match status" value="1"/>
</dbReference>
<name>CYB_MOGIN</name>
<protein>
    <recommendedName>
        <fullName>Cytochrome b</fullName>
    </recommendedName>
    <alternativeName>
        <fullName>Complex III subunit 3</fullName>
    </alternativeName>
    <alternativeName>
        <fullName>Complex III subunit III</fullName>
    </alternativeName>
    <alternativeName>
        <fullName>Cytochrome b-c1 complex subunit 3</fullName>
    </alternativeName>
    <alternativeName>
        <fullName>Ubiquinol-cytochrome-c reductase complex cytochrome b subunit</fullName>
    </alternativeName>
</protein>
<gene>
    <name type="primary">MT-CYB</name>
    <name type="synonym">COB</name>
    <name type="synonym">CYTB</name>
    <name type="synonym">MTCYB</name>
</gene>
<reference key="1">
    <citation type="journal article" date="2000" name="Genes Genet. Syst.">
        <title>Molecular phylogeny of East Asian moles inferred from the sequence variation of the mitochondrial cytochrome b gene.</title>
        <authorList>
            <person name="Tsuchiya K."/>
            <person name="Suzuki H."/>
            <person name="Shinohara A."/>
            <person name="Harada M."/>
            <person name="Wakana S."/>
            <person name="Sakaizumi M."/>
            <person name="Han S.H."/>
            <person name="Lin L.K."/>
            <person name="Kryukov A.P."/>
        </authorList>
    </citation>
    <scope>NUCLEOTIDE SEQUENCE [GENOMIC DNA]</scope>
</reference>
<comment type="function">
    <text evidence="2">Component of the ubiquinol-cytochrome c reductase complex (complex III or cytochrome b-c1 complex) that is part of the mitochondrial respiratory chain. The b-c1 complex mediates electron transfer from ubiquinol to cytochrome c. Contributes to the generation of a proton gradient across the mitochondrial membrane that is then used for ATP synthesis.</text>
</comment>
<comment type="cofactor">
    <cofactor evidence="2">
        <name>heme b</name>
        <dbReference type="ChEBI" id="CHEBI:60344"/>
    </cofactor>
    <text evidence="2">Binds 2 heme b groups non-covalently.</text>
</comment>
<comment type="subunit">
    <text evidence="2">The cytochrome bc1 complex contains 11 subunits: 3 respiratory subunits (MT-CYB, CYC1 and UQCRFS1), 2 core proteins (UQCRC1 and UQCRC2) and 6 low-molecular weight proteins (UQCRH/QCR6, UQCRB/QCR7, UQCRQ/QCR8, UQCR10/QCR9, UQCR11/QCR10 and a cleavage product of UQCRFS1). This cytochrome bc1 complex then forms a dimer.</text>
</comment>
<comment type="subcellular location">
    <subcellularLocation>
        <location evidence="2">Mitochondrion inner membrane</location>
        <topology evidence="2">Multi-pass membrane protein</topology>
    </subcellularLocation>
</comment>
<comment type="miscellaneous">
    <text evidence="1">Heme 1 (or BL or b562) is low-potential and absorbs at about 562 nm, and heme 2 (or BH or b566) is high-potential and absorbs at about 566 nm.</text>
</comment>
<comment type="similarity">
    <text evidence="3 4">Belongs to the cytochrome b family.</text>
</comment>
<comment type="caution">
    <text evidence="2">The full-length protein contains only eight transmembrane helices, not nine as predicted by bioinformatics tools.</text>
</comment>
<organism>
    <name type="scientific">Mogera insularis</name>
    <name type="common">Insular mole</name>
    <name type="synonym">Talpa insularis</name>
    <dbReference type="NCBI Taxonomy" id="114413"/>
    <lineage>
        <taxon>Eukaryota</taxon>
        <taxon>Metazoa</taxon>
        <taxon>Chordata</taxon>
        <taxon>Craniata</taxon>
        <taxon>Vertebrata</taxon>
        <taxon>Euteleostomi</taxon>
        <taxon>Mammalia</taxon>
        <taxon>Eutheria</taxon>
        <taxon>Laurasiatheria</taxon>
        <taxon>Eulipotyphla</taxon>
        <taxon>Talpidae</taxon>
        <taxon>Mogera</taxon>
    </lineage>
</organism>
<geneLocation type="mitochondrion"/>
<accession>Q9MQY1</accession>
<sequence length="379" mass="42695">MTNIRKTHPLMKIINNSFIDLPAPSNISSWWNFGSLLGICLILQILTGLFLAMHYTSDTMTAFSSVTHICRDVNYGWLIRYLHANGASMFFICLFLHVGRGLYYGSYMFMETWNIGVILLFAVMATAFMGYVLPWGQMSFWGATVITNLLSAIPYIGTNLVEWIWGGFSVDKATLTRFFAFHFILPFIIAALAGVHLLFLHETGSNNPSGLSSDTDKIPFHPYYTIKDILGALILILVLSSLVLFSPDLLGDPDNYIPANPLNTPPHIKPEWYFLFAYAILRSIPNKLGGVLALVFSILILALIPFLHTSKQRSMMFRPISQCLFWLLVADLLILTWIGGQPVEHPFIIIGQLASILYFSLILIMMPLASLMENNLLKW</sequence>
<keyword id="KW-0249">Electron transport</keyword>
<keyword id="KW-0349">Heme</keyword>
<keyword id="KW-0408">Iron</keyword>
<keyword id="KW-0472">Membrane</keyword>
<keyword id="KW-0479">Metal-binding</keyword>
<keyword id="KW-0496">Mitochondrion</keyword>
<keyword id="KW-0999">Mitochondrion inner membrane</keyword>
<keyword id="KW-0679">Respiratory chain</keyword>
<keyword id="KW-0812">Transmembrane</keyword>
<keyword id="KW-1133">Transmembrane helix</keyword>
<keyword id="KW-0813">Transport</keyword>
<keyword id="KW-0830">Ubiquinone</keyword>
<proteinExistence type="inferred from homology"/>
<evidence type="ECO:0000250" key="1"/>
<evidence type="ECO:0000250" key="2">
    <source>
        <dbReference type="UniProtKB" id="P00157"/>
    </source>
</evidence>
<evidence type="ECO:0000255" key="3">
    <source>
        <dbReference type="PROSITE-ProRule" id="PRU00967"/>
    </source>
</evidence>
<evidence type="ECO:0000255" key="4">
    <source>
        <dbReference type="PROSITE-ProRule" id="PRU00968"/>
    </source>
</evidence>
<feature type="chain" id="PRO_0000061196" description="Cytochrome b">
    <location>
        <begin position="1"/>
        <end position="379"/>
    </location>
</feature>
<feature type="transmembrane region" description="Helical" evidence="2">
    <location>
        <begin position="33"/>
        <end position="53"/>
    </location>
</feature>
<feature type="transmembrane region" description="Helical" evidence="2">
    <location>
        <begin position="77"/>
        <end position="98"/>
    </location>
</feature>
<feature type="transmembrane region" description="Helical" evidence="2">
    <location>
        <begin position="113"/>
        <end position="133"/>
    </location>
</feature>
<feature type="transmembrane region" description="Helical" evidence="2">
    <location>
        <begin position="178"/>
        <end position="198"/>
    </location>
</feature>
<feature type="transmembrane region" description="Helical" evidence="2">
    <location>
        <begin position="226"/>
        <end position="246"/>
    </location>
</feature>
<feature type="transmembrane region" description="Helical" evidence="2">
    <location>
        <begin position="288"/>
        <end position="308"/>
    </location>
</feature>
<feature type="transmembrane region" description="Helical" evidence="2">
    <location>
        <begin position="320"/>
        <end position="340"/>
    </location>
</feature>
<feature type="transmembrane region" description="Helical" evidence="2">
    <location>
        <begin position="347"/>
        <end position="367"/>
    </location>
</feature>
<feature type="binding site" description="axial binding residue" evidence="2">
    <location>
        <position position="83"/>
    </location>
    <ligand>
        <name>heme b</name>
        <dbReference type="ChEBI" id="CHEBI:60344"/>
        <label>b562</label>
    </ligand>
    <ligandPart>
        <name>Fe</name>
        <dbReference type="ChEBI" id="CHEBI:18248"/>
    </ligandPart>
</feature>
<feature type="binding site" description="axial binding residue" evidence="2">
    <location>
        <position position="97"/>
    </location>
    <ligand>
        <name>heme b</name>
        <dbReference type="ChEBI" id="CHEBI:60344"/>
        <label>b566</label>
    </ligand>
    <ligandPart>
        <name>Fe</name>
        <dbReference type="ChEBI" id="CHEBI:18248"/>
    </ligandPart>
</feature>
<feature type="binding site" description="axial binding residue" evidence="2">
    <location>
        <position position="182"/>
    </location>
    <ligand>
        <name>heme b</name>
        <dbReference type="ChEBI" id="CHEBI:60344"/>
        <label>b562</label>
    </ligand>
    <ligandPart>
        <name>Fe</name>
        <dbReference type="ChEBI" id="CHEBI:18248"/>
    </ligandPart>
</feature>
<feature type="binding site" description="axial binding residue" evidence="2">
    <location>
        <position position="196"/>
    </location>
    <ligand>
        <name>heme b</name>
        <dbReference type="ChEBI" id="CHEBI:60344"/>
        <label>b566</label>
    </ligand>
    <ligandPart>
        <name>Fe</name>
        <dbReference type="ChEBI" id="CHEBI:18248"/>
    </ligandPart>
</feature>
<feature type="binding site" evidence="2">
    <location>
        <position position="201"/>
    </location>
    <ligand>
        <name>a ubiquinone</name>
        <dbReference type="ChEBI" id="CHEBI:16389"/>
    </ligand>
</feature>